<feature type="chain" id="PRO_1000046691" description="UPF0301 protein YPDSF_0579">
    <location>
        <begin position="1"/>
        <end position="187"/>
    </location>
</feature>
<organism>
    <name type="scientific">Yersinia pestis (strain Pestoides F)</name>
    <dbReference type="NCBI Taxonomy" id="386656"/>
    <lineage>
        <taxon>Bacteria</taxon>
        <taxon>Pseudomonadati</taxon>
        <taxon>Pseudomonadota</taxon>
        <taxon>Gammaproteobacteria</taxon>
        <taxon>Enterobacterales</taxon>
        <taxon>Yersiniaceae</taxon>
        <taxon>Yersinia</taxon>
    </lineage>
</organism>
<gene>
    <name type="ordered locus">YPDSF_0579</name>
</gene>
<protein>
    <recommendedName>
        <fullName evidence="1">UPF0301 protein YPDSF_0579</fullName>
    </recommendedName>
</protein>
<reference key="1">
    <citation type="submission" date="2007-02" db="EMBL/GenBank/DDBJ databases">
        <title>Complete sequence of chromosome of Yersinia pestis Pestoides F.</title>
        <authorList>
            <consortium name="US DOE Joint Genome Institute"/>
            <person name="Copeland A."/>
            <person name="Lucas S."/>
            <person name="Lapidus A."/>
            <person name="Barry K."/>
            <person name="Detter J.C."/>
            <person name="Glavina del Rio T."/>
            <person name="Hammon N."/>
            <person name="Israni S."/>
            <person name="Dalin E."/>
            <person name="Tice H."/>
            <person name="Pitluck S."/>
            <person name="Di Bartolo G."/>
            <person name="Chain P."/>
            <person name="Malfatti S."/>
            <person name="Shin M."/>
            <person name="Vergez L."/>
            <person name="Schmutz J."/>
            <person name="Larimer F."/>
            <person name="Land M."/>
            <person name="Hauser L."/>
            <person name="Worsham P."/>
            <person name="Chu M."/>
            <person name="Bearden S."/>
            <person name="Garcia E."/>
            <person name="Richardson P."/>
        </authorList>
    </citation>
    <scope>NUCLEOTIDE SEQUENCE [LARGE SCALE GENOMIC DNA]</scope>
    <source>
        <strain>Pestoides F</strain>
    </source>
</reference>
<dbReference type="EMBL" id="CP000668">
    <property type="protein sequence ID" value="ABP38989.1"/>
    <property type="molecule type" value="Genomic_DNA"/>
</dbReference>
<dbReference type="RefSeq" id="WP_002209977.1">
    <property type="nucleotide sequence ID" value="NZ_CP009715.1"/>
</dbReference>
<dbReference type="SMR" id="A4TI77"/>
<dbReference type="KEGG" id="ypp:YPDSF_0579"/>
<dbReference type="PATRIC" id="fig|386656.14.peg.1897"/>
<dbReference type="GO" id="GO:0005829">
    <property type="term" value="C:cytosol"/>
    <property type="evidence" value="ECO:0007669"/>
    <property type="project" value="TreeGrafter"/>
</dbReference>
<dbReference type="Gene3D" id="3.40.1740.10">
    <property type="entry name" value="VC0467-like"/>
    <property type="match status" value="1"/>
</dbReference>
<dbReference type="Gene3D" id="3.30.70.1300">
    <property type="entry name" value="VC0467-like domains"/>
    <property type="match status" value="1"/>
</dbReference>
<dbReference type="HAMAP" id="MF_00758">
    <property type="entry name" value="UPF0301"/>
    <property type="match status" value="1"/>
</dbReference>
<dbReference type="InterPro" id="IPR003774">
    <property type="entry name" value="AlgH-like"/>
</dbReference>
<dbReference type="NCBIfam" id="NF001266">
    <property type="entry name" value="PRK00228.1-1"/>
    <property type="match status" value="1"/>
</dbReference>
<dbReference type="PANTHER" id="PTHR30327">
    <property type="entry name" value="UNCHARACTERIZED PROTEIN YQGE"/>
    <property type="match status" value="1"/>
</dbReference>
<dbReference type="PANTHER" id="PTHR30327:SF1">
    <property type="entry name" value="UPF0301 PROTEIN YQGE"/>
    <property type="match status" value="1"/>
</dbReference>
<dbReference type="Pfam" id="PF02622">
    <property type="entry name" value="DUF179"/>
    <property type="match status" value="1"/>
</dbReference>
<dbReference type="SUPFAM" id="SSF143456">
    <property type="entry name" value="VC0467-like"/>
    <property type="match status" value="1"/>
</dbReference>
<accession>A4TI77</accession>
<name>Y579_YERPP</name>
<proteinExistence type="inferred from homology"/>
<comment type="similarity">
    <text evidence="1">Belongs to the UPF0301 (AlgH) family.</text>
</comment>
<sequence>MNLQHHFLIAMPSLQDPQFKRSVIYICEHGEKGAMGLVINKPLEQLTVETILEKLKIKSPSRDPAIRLDNVVLAGGPLAEDRGFILHSPQEGFASSIHISPETMITTSKDVLETLGTSGQPKNLLVALGYASWRQGQLEQELLDNVWLTTEADTHILFNTPIAERWQAAANKLGINIFNIAPQAGHA</sequence>
<evidence type="ECO:0000255" key="1">
    <source>
        <dbReference type="HAMAP-Rule" id="MF_00758"/>
    </source>
</evidence>